<proteinExistence type="inferred from homology"/>
<name>1A1D_BRASB</name>
<keyword id="KW-0378">Hydrolase</keyword>
<keyword id="KW-0663">Pyridoxal phosphate</keyword>
<keyword id="KW-1185">Reference proteome</keyword>
<reference key="1">
    <citation type="journal article" date="2007" name="Science">
        <title>Legumes symbioses: absence of nod genes in photosynthetic bradyrhizobia.</title>
        <authorList>
            <person name="Giraud E."/>
            <person name="Moulin L."/>
            <person name="Vallenet D."/>
            <person name="Barbe V."/>
            <person name="Cytryn E."/>
            <person name="Avarre J.-C."/>
            <person name="Jaubert M."/>
            <person name="Simon D."/>
            <person name="Cartieaux F."/>
            <person name="Prin Y."/>
            <person name="Bena G."/>
            <person name="Hannibal L."/>
            <person name="Fardoux J."/>
            <person name="Kojadinovic M."/>
            <person name="Vuillet L."/>
            <person name="Lajus A."/>
            <person name="Cruveiller S."/>
            <person name="Rouy Z."/>
            <person name="Mangenot S."/>
            <person name="Segurens B."/>
            <person name="Dossat C."/>
            <person name="Franck W.L."/>
            <person name="Chang W.-S."/>
            <person name="Saunders E."/>
            <person name="Bruce D."/>
            <person name="Richardson P."/>
            <person name="Normand P."/>
            <person name="Dreyfus B."/>
            <person name="Pignol D."/>
            <person name="Stacey G."/>
            <person name="Emerich D."/>
            <person name="Vermeglio A."/>
            <person name="Medigue C."/>
            <person name="Sadowsky M."/>
        </authorList>
    </citation>
    <scope>NUCLEOTIDE SEQUENCE [LARGE SCALE GENOMIC DNA]</scope>
    <source>
        <strain>BTAi1 / ATCC BAA-1182</strain>
    </source>
</reference>
<dbReference type="EC" id="3.5.99.7" evidence="1"/>
<dbReference type="EMBL" id="CP000494">
    <property type="protein sequence ID" value="ABQ36190.1"/>
    <property type="molecule type" value="Genomic_DNA"/>
</dbReference>
<dbReference type="RefSeq" id="WP_012044191.1">
    <property type="nucleotide sequence ID" value="NC_009485.1"/>
</dbReference>
<dbReference type="SMR" id="A5EJ46"/>
<dbReference type="STRING" id="288000.BBta_4127"/>
<dbReference type="KEGG" id="bbt:BBta_4127"/>
<dbReference type="eggNOG" id="COG2515">
    <property type="taxonomic scope" value="Bacteria"/>
</dbReference>
<dbReference type="HOGENOM" id="CLU_048897_2_1_5"/>
<dbReference type="OrthoDB" id="9801249at2"/>
<dbReference type="Proteomes" id="UP000000246">
    <property type="component" value="Chromosome"/>
</dbReference>
<dbReference type="GO" id="GO:0008660">
    <property type="term" value="F:1-aminocyclopropane-1-carboxylate deaminase activity"/>
    <property type="evidence" value="ECO:0007669"/>
    <property type="project" value="UniProtKB-UniRule"/>
</dbReference>
<dbReference type="GO" id="GO:0019148">
    <property type="term" value="F:D-cysteine desulfhydrase activity"/>
    <property type="evidence" value="ECO:0007669"/>
    <property type="project" value="TreeGrafter"/>
</dbReference>
<dbReference type="GO" id="GO:0030170">
    <property type="term" value="F:pyridoxal phosphate binding"/>
    <property type="evidence" value="ECO:0007669"/>
    <property type="project" value="InterPro"/>
</dbReference>
<dbReference type="GO" id="GO:0018871">
    <property type="term" value="P:1-aminocyclopropane-1-carboxylate metabolic process"/>
    <property type="evidence" value="ECO:0007669"/>
    <property type="project" value="UniProtKB-UniRule"/>
</dbReference>
<dbReference type="GO" id="GO:0009310">
    <property type="term" value="P:amine catabolic process"/>
    <property type="evidence" value="ECO:0007669"/>
    <property type="project" value="InterPro"/>
</dbReference>
<dbReference type="CDD" id="cd06449">
    <property type="entry name" value="ACCD"/>
    <property type="match status" value="1"/>
</dbReference>
<dbReference type="Gene3D" id="3.40.50.1100">
    <property type="match status" value="2"/>
</dbReference>
<dbReference type="HAMAP" id="MF_00807">
    <property type="entry name" value="ACC_deaminase"/>
    <property type="match status" value="1"/>
</dbReference>
<dbReference type="InterPro" id="IPR027278">
    <property type="entry name" value="ACCD_DCysDesulf"/>
</dbReference>
<dbReference type="InterPro" id="IPR005965">
    <property type="entry name" value="ACP_carboxylate_deaminase"/>
</dbReference>
<dbReference type="InterPro" id="IPR020601">
    <property type="entry name" value="ACP_carboxylate_deaminase_bac"/>
</dbReference>
<dbReference type="InterPro" id="IPR001926">
    <property type="entry name" value="TrpB-like_PALP"/>
</dbReference>
<dbReference type="InterPro" id="IPR036052">
    <property type="entry name" value="TrpB-like_PALP_sf"/>
</dbReference>
<dbReference type="NCBIfam" id="TIGR01274">
    <property type="entry name" value="ACC_deam"/>
    <property type="match status" value="1"/>
</dbReference>
<dbReference type="PANTHER" id="PTHR43780">
    <property type="entry name" value="1-AMINOCYCLOPROPANE-1-CARBOXYLATE DEAMINASE-RELATED"/>
    <property type="match status" value="1"/>
</dbReference>
<dbReference type="PANTHER" id="PTHR43780:SF2">
    <property type="entry name" value="1-AMINOCYCLOPROPANE-1-CARBOXYLATE DEAMINASE-RELATED"/>
    <property type="match status" value="1"/>
</dbReference>
<dbReference type="Pfam" id="PF00291">
    <property type="entry name" value="PALP"/>
    <property type="match status" value="1"/>
</dbReference>
<dbReference type="PIRSF" id="PIRSF006278">
    <property type="entry name" value="ACCD_DCysDesulf"/>
    <property type="match status" value="1"/>
</dbReference>
<dbReference type="SUPFAM" id="SSF53686">
    <property type="entry name" value="Tryptophan synthase beta subunit-like PLP-dependent enzymes"/>
    <property type="match status" value="1"/>
</dbReference>
<sequence>MLRLDKFKKYPLTFGATPIEHLPRLTAALGGKVQIYAKRDDCNSGLAMGGNKLRKLEYIVPDAIESNADTLVSIGGVQSNHTRMVAATAAKIGMKCVVVQESWVPHEDAVYDRVGNILMTRLMGADSRIVPDGFDIGIRKSWEDAIQSVKDAGGKPYGIPAGASVHKFGGLGYVGFAEEVRAQEAEMGIKFDYIIVCVVTGSTQAGMIVGFAADGRADRVIGIDASGTPEQTRTQVRQIVDNTAELVELGRKVRDDEIVILEDYAYPAYGVPSAETNEAIRLAARTEAMITDPVYEGKSMQGMIDLVKKGYFPEGSKVLYAHLGGAPAINGYSYTYRNG</sequence>
<comment type="function">
    <text evidence="1">Catalyzes a cyclopropane ring-opening reaction, the irreversible conversion of 1-aminocyclopropane-1-carboxylate (ACC) to ammonia and alpha-ketobutyrate. Allows growth on ACC as a nitrogen source.</text>
</comment>
<comment type="catalytic activity">
    <reaction evidence="1">
        <text>1-aminocyclopropane-1-carboxylate + H2O = 2-oxobutanoate + NH4(+)</text>
        <dbReference type="Rhea" id="RHEA:16933"/>
        <dbReference type="ChEBI" id="CHEBI:15377"/>
        <dbReference type="ChEBI" id="CHEBI:16763"/>
        <dbReference type="ChEBI" id="CHEBI:28938"/>
        <dbReference type="ChEBI" id="CHEBI:58360"/>
        <dbReference type="EC" id="3.5.99.7"/>
    </reaction>
</comment>
<comment type="cofactor">
    <cofactor evidence="1">
        <name>pyridoxal 5'-phosphate</name>
        <dbReference type="ChEBI" id="CHEBI:597326"/>
    </cofactor>
</comment>
<comment type="subunit">
    <text evidence="1">Homotrimer.</text>
</comment>
<comment type="similarity">
    <text evidence="1">Belongs to the ACC deaminase/D-cysteine desulfhydrase family.</text>
</comment>
<gene>
    <name evidence="1" type="primary">acdS</name>
    <name type="ordered locus">BBta_4127</name>
</gene>
<organism>
    <name type="scientific">Bradyrhizobium sp. (strain BTAi1 / ATCC BAA-1182)</name>
    <dbReference type="NCBI Taxonomy" id="288000"/>
    <lineage>
        <taxon>Bacteria</taxon>
        <taxon>Pseudomonadati</taxon>
        <taxon>Pseudomonadota</taxon>
        <taxon>Alphaproteobacteria</taxon>
        <taxon>Hyphomicrobiales</taxon>
        <taxon>Nitrobacteraceae</taxon>
        <taxon>Bradyrhizobium</taxon>
    </lineage>
</organism>
<feature type="chain" id="PRO_0000304368" description="1-aminocyclopropane-1-carboxylate deaminase">
    <location>
        <begin position="1"/>
        <end position="339"/>
    </location>
</feature>
<feature type="active site" description="Nucleophile" evidence="1">
    <location>
        <position position="79"/>
    </location>
</feature>
<feature type="modified residue" description="N6-(pyridoxal phosphate)lysine" evidence="1">
    <location>
        <position position="52"/>
    </location>
</feature>
<evidence type="ECO:0000255" key="1">
    <source>
        <dbReference type="HAMAP-Rule" id="MF_00807"/>
    </source>
</evidence>
<protein>
    <recommendedName>
        <fullName evidence="1">1-aminocyclopropane-1-carboxylate deaminase</fullName>
        <shortName evidence="1">ACC deaminase</shortName>
        <shortName evidence="1">ACCD</shortName>
        <ecNumber evidence="1">3.5.99.7</ecNumber>
    </recommendedName>
</protein>
<accession>A5EJ46</accession>